<gene>
    <name evidence="1" type="primary">ndk</name>
    <name type="ordered locus">SGR_4930</name>
</gene>
<name>NDK_STRGG</name>
<reference key="1">
    <citation type="journal article" date="2008" name="J. Bacteriol.">
        <title>Genome sequence of the streptomycin-producing microorganism Streptomyces griseus IFO 13350.</title>
        <authorList>
            <person name="Ohnishi Y."/>
            <person name="Ishikawa J."/>
            <person name="Hara H."/>
            <person name="Suzuki H."/>
            <person name="Ikenoya M."/>
            <person name="Ikeda H."/>
            <person name="Yamashita A."/>
            <person name="Hattori M."/>
            <person name="Horinouchi S."/>
        </authorList>
    </citation>
    <scope>NUCLEOTIDE SEQUENCE [LARGE SCALE GENOMIC DNA]</scope>
    <source>
        <strain>JCM 4626 / CBS 651.72 / NBRC 13350 / KCC S-0626 / ISP 5235</strain>
    </source>
</reference>
<sequence length="137" mass="15176">MTQRTLVLLKPDAVRRGLIGEIVGRIERKADWRITALELRTLDHGTLEQHYGEHKGRPFYEPLMEFMQSGPVVALVAEGERVIEGVRTLAGPTDPIAAAPGSIRGDFGTITRENLIHASDSEESAERELKLFFPGLS</sequence>
<protein>
    <recommendedName>
        <fullName evidence="1">Nucleoside diphosphate kinase</fullName>
        <shortName evidence="1">NDK</shortName>
        <shortName evidence="1">NDP kinase</shortName>
        <ecNumber evidence="1">2.7.4.6</ecNumber>
    </recommendedName>
    <alternativeName>
        <fullName evidence="1">Nucleoside-2-P kinase</fullName>
    </alternativeName>
</protein>
<feature type="chain" id="PRO_1000125020" description="Nucleoside diphosphate kinase">
    <location>
        <begin position="1"/>
        <end position="137"/>
    </location>
</feature>
<feature type="active site" description="Pros-phosphohistidine intermediate" evidence="1">
    <location>
        <position position="117"/>
    </location>
</feature>
<feature type="binding site" evidence="1">
    <location>
        <position position="10"/>
    </location>
    <ligand>
        <name>ATP</name>
        <dbReference type="ChEBI" id="CHEBI:30616"/>
    </ligand>
</feature>
<feature type="binding site" evidence="1">
    <location>
        <position position="59"/>
    </location>
    <ligand>
        <name>ATP</name>
        <dbReference type="ChEBI" id="CHEBI:30616"/>
    </ligand>
</feature>
<feature type="binding site" evidence="1">
    <location>
        <position position="87"/>
    </location>
    <ligand>
        <name>ATP</name>
        <dbReference type="ChEBI" id="CHEBI:30616"/>
    </ligand>
</feature>
<feature type="binding site" evidence="1">
    <location>
        <position position="93"/>
    </location>
    <ligand>
        <name>ATP</name>
        <dbReference type="ChEBI" id="CHEBI:30616"/>
    </ligand>
</feature>
<feature type="binding site" evidence="1">
    <location>
        <position position="104"/>
    </location>
    <ligand>
        <name>ATP</name>
        <dbReference type="ChEBI" id="CHEBI:30616"/>
    </ligand>
</feature>
<feature type="binding site" evidence="1">
    <location>
        <position position="114"/>
    </location>
    <ligand>
        <name>ATP</name>
        <dbReference type="ChEBI" id="CHEBI:30616"/>
    </ligand>
</feature>
<accession>B1VXB3</accession>
<proteinExistence type="inferred from homology"/>
<organism>
    <name type="scientific">Streptomyces griseus subsp. griseus (strain JCM 4626 / CBS 651.72 / NBRC 13350 / KCC S-0626 / ISP 5235)</name>
    <dbReference type="NCBI Taxonomy" id="455632"/>
    <lineage>
        <taxon>Bacteria</taxon>
        <taxon>Bacillati</taxon>
        <taxon>Actinomycetota</taxon>
        <taxon>Actinomycetes</taxon>
        <taxon>Kitasatosporales</taxon>
        <taxon>Streptomycetaceae</taxon>
        <taxon>Streptomyces</taxon>
    </lineage>
</organism>
<dbReference type="EC" id="2.7.4.6" evidence="1"/>
<dbReference type="EMBL" id="AP009493">
    <property type="protein sequence ID" value="BAG21759.1"/>
    <property type="molecule type" value="Genomic_DNA"/>
</dbReference>
<dbReference type="RefSeq" id="WP_003969184.1">
    <property type="nucleotide sequence ID" value="NC_010572.1"/>
</dbReference>
<dbReference type="SMR" id="B1VXB3"/>
<dbReference type="GeneID" id="65910050"/>
<dbReference type="KEGG" id="sgr:SGR_4930"/>
<dbReference type="eggNOG" id="COG0105">
    <property type="taxonomic scope" value="Bacteria"/>
</dbReference>
<dbReference type="HOGENOM" id="CLU_060216_6_3_11"/>
<dbReference type="Proteomes" id="UP000001685">
    <property type="component" value="Chromosome"/>
</dbReference>
<dbReference type="GO" id="GO:0005737">
    <property type="term" value="C:cytoplasm"/>
    <property type="evidence" value="ECO:0007669"/>
    <property type="project" value="UniProtKB-SubCell"/>
</dbReference>
<dbReference type="GO" id="GO:0005524">
    <property type="term" value="F:ATP binding"/>
    <property type="evidence" value="ECO:0007669"/>
    <property type="project" value="UniProtKB-UniRule"/>
</dbReference>
<dbReference type="GO" id="GO:0046872">
    <property type="term" value="F:metal ion binding"/>
    <property type="evidence" value="ECO:0007669"/>
    <property type="project" value="UniProtKB-KW"/>
</dbReference>
<dbReference type="GO" id="GO:0004550">
    <property type="term" value="F:nucleoside diphosphate kinase activity"/>
    <property type="evidence" value="ECO:0007669"/>
    <property type="project" value="UniProtKB-UniRule"/>
</dbReference>
<dbReference type="GO" id="GO:0006241">
    <property type="term" value="P:CTP biosynthetic process"/>
    <property type="evidence" value="ECO:0007669"/>
    <property type="project" value="UniProtKB-UniRule"/>
</dbReference>
<dbReference type="GO" id="GO:0006183">
    <property type="term" value="P:GTP biosynthetic process"/>
    <property type="evidence" value="ECO:0007669"/>
    <property type="project" value="UniProtKB-UniRule"/>
</dbReference>
<dbReference type="GO" id="GO:0006228">
    <property type="term" value="P:UTP biosynthetic process"/>
    <property type="evidence" value="ECO:0007669"/>
    <property type="project" value="UniProtKB-UniRule"/>
</dbReference>
<dbReference type="CDD" id="cd04413">
    <property type="entry name" value="NDPk_I"/>
    <property type="match status" value="1"/>
</dbReference>
<dbReference type="FunFam" id="3.30.70.141:FF:000003">
    <property type="entry name" value="Nucleoside diphosphate kinase"/>
    <property type="match status" value="1"/>
</dbReference>
<dbReference type="Gene3D" id="3.30.70.141">
    <property type="entry name" value="Nucleoside diphosphate kinase-like domain"/>
    <property type="match status" value="1"/>
</dbReference>
<dbReference type="HAMAP" id="MF_00451">
    <property type="entry name" value="NDP_kinase"/>
    <property type="match status" value="1"/>
</dbReference>
<dbReference type="InterPro" id="IPR034907">
    <property type="entry name" value="NDK-like_dom"/>
</dbReference>
<dbReference type="InterPro" id="IPR036850">
    <property type="entry name" value="NDK-like_dom_sf"/>
</dbReference>
<dbReference type="InterPro" id="IPR001564">
    <property type="entry name" value="Nucleoside_diP_kinase"/>
</dbReference>
<dbReference type="InterPro" id="IPR023005">
    <property type="entry name" value="Nucleoside_diP_kinase_AS"/>
</dbReference>
<dbReference type="NCBIfam" id="NF001908">
    <property type="entry name" value="PRK00668.1"/>
    <property type="match status" value="1"/>
</dbReference>
<dbReference type="PANTHER" id="PTHR11349">
    <property type="entry name" value="NUCLEOSIDE DIPHOSPHATE KINASE"/>
    <property type="match status" value="1"/>
</dbReference>
<dbReference type="Pfam" id="PF00334">
    <property type="entry name" value="NDK"/>
    <property type="match status" value="1"/>
</dbReference>
<dbReference type="PRINTS" id="PR01243">
    <property type="entry name" value="NUCDPKINASE"/>
</dbReference>
<dbReference type="SMART" id="SM00562">
    <property type="entry name" value="NDK"/>
    <property type="match status" value="1"/>
</dbReference>
<dbReference type="SUPFAM" id="SSF54919">
    <property type="entry name" value="Nucleoside diphosphate kinase, NDK"/>
    <property type="match status" value="1"/>
</dbReference>
<dbReference type="PROSITE" id="PS00469">
    <property type="entry name" value="NDPK"/>
    <property type="match status" value="1"/>
</dbReference>
<dbReference type="PROSITE" id="PS51374">
    <property type="entry name" value="NDPK_LIKE"/>
    <property type="match status" value="1"/>
</dbReference>
<keyword id="KW-0067">ATP-binding</keyword>
<keyword id="KW-0963">Cytoplasm</keyword>
<keyword id="KW-0418">Kinase</keyword>
<keyword id="KW-0460">Magnesium</keyword>
<keyword id="KW-0479">Metal-binding</keyword>
<keyword id="KW-0546">Nucleotide metabolism</keyword>
<keyword id="KW-0547">Nucleotide-binding</keyword>
<keyword id="KW-0597">Phosphoprotein</keyword>
<keyword id="KW-0808">Transferase</keyword>
<comment type="function">
    <text evidence="1">Major role in the synthesis of nucleoside triphosphates other than ATP. The ATP gamma phosphate is transferred to the NDP beta phosphate via a ping-pong mechanism, using a phosphorylated active-site intermediate.</text>
</comment>
<comment type="catalytic activity">
    <reaction evidence="1">
        <text>a 2'-deoxyribonucleoside 5'-diphosphate + ATP = a 2'-deoxyribonucleoside 5'-triphosphate + ADP</text>
        <dbReference type="Rhea" id="RHEA:44640"/>
        <dbReference type="ChEBI" id="CHEBI:30616"/>
        <dbReference type="ChEBI" id="CHEBI:61560"/>
        <dbReference type="ChEBI" id="CHEBI:73316"/>
        <dbReference type="ChEBI" id="CHEBI:456216"/>
        <dbReference type="EC" id="2.7.4.6"/>
    </reaction>
</comment>
<comment type="catalytic activity">
    <reaction evidence="1">
        <text>a ribonucleoside 5'-diphosphate + ATP = a ribonucleoside 5'-triphosphate + ADP</text>
        <dbReference type="Rhea" id="RHEA:18113"/>
        <dbReference type="ChEBI" id="CHEBI:30616"/>
        <dbReference type="ChEBI" id="CHEBI:57930"/>
        <dbReference type="ChEBI" id="CHEBI:61557"/>
        <dbReference type="ChEBI" id="CHEBI:456216"/>
        <dbReference type="EC" id="2.7.4.6"/>
    </reaction>
</comment>
<comment type="cofactor">
    <cofactor evidence="1">
        <name>Mg(2+)</name>
        <dbReference type="ChEBI" id="CHEBI:18420"/>
    </cofactor>
</comment>
<comment type="subunit">
    <text evidence="1">Homotetramer.</text>
</comment>
<comment type="subcellular location">
    <subcellularLocation>
        <location evidence="1">Cytoplasm</location>
    </subcellularLocation>
</comment>
<comment type="similarity">
    <text evidence="1">Belongs to the NDK family.</text>
</comment>
<evidence type="ECO:0000255" key="1">
    <source>
        <dbReference type="HAMAP-Rule" id="MF_00451"/>
    </source>
</evidence>